<gene>
    <name evidence="1" type="primary">argR</name>
    <name type="ordered locus">ETA_02970</name>
</gene>
<organism>
    <name type="scientific">Erwinia tasmaniensis (strain DSM 17950 / CFBP 7177 / CIP 109463 / NCPPB 4357 / Et1/99)</name>
    <dbReference type="NCBI Taxonomy" id="465817"/>
    <lineage>
        <taxon>Bacteria</taxon>
        <taxon>Pseudomonadati</taxon>
        <taxon>Pseudomonadota</taxon>
        <taxon>Gammaproteobacteria</taxon>
        <taxon>Enterobacterales</taxon>
        <taxon>Erwiniaceae</taxon>
        <taxon>Erwinia</taxon>
    </lineage>
</organism>
<sequence>MRNSSKQEDLIKAFKALLKEEKFSSQGEIVNALQEEGFENINQSKVSRMLTKFGAVRTRNAKMEMVYCLPAELGVPTTTSPLKNLVLDIDFNDALVVIHTSPGAAQLIARLLDSLGKAEGILGTIAGDDTIFITPARSFTVKQLHDAILVLFEQEL</sequence>
<reference key="1">
    <citation type="journal article" date="2008" name="Environ. Microbiol.">
        <title>The genome of Erwinia tasmaniensis strain Et1/99, a non-pathogenic bacterium in the genus Erwinia.</title>
        <authorList>
            <person name="Kube M."/>
            <person name="Migdoll A.M."/>
            <person name="Mueller I."/>
            <person name="Kuhl H."/>
            <person name="Beck A."/>
            <person name="Reinhardt R."/>
            <person name="Geider K."/>
        </authorList>
    </citation>
    <scope>NUCLEOTIDE SEQUENCE [LARGE SCALE GENOMIC DNA]</scope>
    <source>
        <strain>DSM 17950 / CFBP 7177 / CIP 109463 / NCPPB 4357 / Et1/99</strain>
    </source>
</reference>
<name>ARGR_ERWT9</name>
<accession>B2VGW6</accession>
<protein>
    <recommendedName>
        <fullName evidence="1">Arginine repressor</fullName>
    </recommendedName>
</protein>
<dbReference type="EMBL" id="CU468135">
    <property type="protein sequence ID" value="CAO95343.1"/>
    <property type="molecule type" value="Genomic_DNA"/>
</dbReference>
<dbReference type="RefSeq" id="WP_012440061.1">
    <property type="nucleotide sequence ID" value="NC_010694.1"/>
</dbReference>
<dbReference type="SMR" id="B2VGW6"/>
<dbReference type="STRING" id="465817.ETA_02970"/>
<dbReference type="KEGG" id="eta:ETA_02970"/>
<dbReference type="eggNOG" id="COG1438">
    <property type="taxonomic scope" value="Bacteria"/>
</dbReference>
<dbReference type="HOGENOM" id="CLU_097103_2_0_6"/>
<dbReference type="OrthoDB" id="7060358at2"/>
<dbReference type="UniPathway" id="UPA00068"/>
<dbReference type="Proteomes" id="UP000001726">
    <property type="component" value="Chromosome"/>
</dbReference>
<dbReference type="GO" id="GO:0005737">
    <property type="term" value="C:cytoplasm"/>
    <property type="evidence" value="ECO:0007669"/>
    <property type="project" value="UniProtKB-SubCell"/>
</dbReference>
<dbReference type="GO" id="GO:0034618">
    <property type="term" value="F:arginine binding"/>
    <property type="evidence" value="ECO:0007669"/>
    <property type="project" value="InterPro"/>
</dbReference>
<dbReference type="GO" id="GO:0003677">
    <property type="term" value="F:DNA binding"/>
    <property type="evidence" value="ECO:0007669"/>
    <property type="project" value="UniProtKB-KW"/>
</dbReference>
<dbReference type="GO" id="GO:0003700">
    <property type="term" value="F:DNA-binding transcription factor activity"/>
    <property type="evidence" value="ECO:0007669"/>
    <property type="project" value="UniProtKB-UniRule"/>
</dbReference>
<dbReference type="GO" id="GO:0006526">
    <property type="term" value="P:L-arginine biosynthetic process"/>
    <property type="evidence" value="ECO:0007669"/>
    <property type="project" value="UniProtKB-UniPathway"/>
</dbReference>
<dbReference type="GO" id="GO:0051259">
    <property type="term" value="P:protein complex oligomerization"/>
    <property type="evidence" value="ECO:0007669"/>
    <property type="project" value="InterPro"/>
</dbReference>
<dbReference type="GO" id="GO:1900079">
    <property type="term" value="P:regulation of arginine biosynthetic process"/>
    <property type="evidence" value="ECO:0007669"/>
    <property type="project" value="UniProtKB-UniRule"/>
</dbReference>
<dbReference type="FunFam" id="1.10.10.10:FF:000074">
    <property type="entry name" value="Arginine repressor"/>
    <property type="match status" value="1"/>
</dbReference>
<dbReference type="FunFam" id="3.30.1360.40:FF:000004">
    <property type="entry name" value="Arginine repressor"/>
    <property type="match status" value="1"/>
</dbReference>
<dbReference type="Gene3D" id="3.30.1360.40">
    <property type="match status" value="1"/>
</dbReference>
<dbReference type="Gene3D" id="1.10.10.10">
    <property type="entry name" value="Winged helix-like DNA-binding domain superfamily/Winged helix DNA-binding domain"/>
    <property type="match status" value="1"/>
</dbReference>
<dbReference type="HAMAP" id="MF_00173">
    <property type="entry name" value="Arg_repressor"/>
    <property type="match status" value="1"/>
</dbReference>
<dbReference type="InterPro" id="IPR001669">
    <property type="entry name" value="Arg_repress"/>
</dbReference>
<dbReference type="InterPro" id="IPR020899">
    <property type="entry name" value="Arg_repress_C"/>
</dbReference>
<dbReference type="InterPro" id="IPR036251">
    <property type="entry name" value="Arg_repress_C_sf"/>
</dbReference>
<dbReference type="InterPro" id="IPR020900">
    <property type="entry name" value="Arg_repress_DNA-bd"/>
</dbReference>
<dbReference type="InterPro" id="IPR036388">
    <property type="entry name" value="WH-like_DNA-bd_sf"/>
</dbReference>
<dbReference type="InterPro" id="IPR036390">
    <property type="entry name" value="WH_DNA-bd_sf"/>
</dbReference>
<dbReference type="NCBIfam" id="TIGR01529">
    <property type="entry name" value="argR_whole"/>
    <property type="match status" value="1"/>
</dbReference>
<dbReference type="NCBIfam" id="NF003457">
    <property type="entry name" value="PRK05066.1"/>
    <property type="match status" value="1"/>
</dbReference>
<dbReference type="PANTHER" id="PTHR34471">
    <property type="entry name" value="ARGININE REPRESSOR"/>
    <property type="match status" value="1"/>
</dbReference>
<dbReference type="PANTHER" id="PTHR34471:SF1">
    <property type="entry name" value="ARGININE REPRESSOR"/>
    <property type="match status" value="1"/>
</dbReference>
<dbReference type="Pfam" id="PF01316">
    <property type="entry name" value="Arg_repressor"/>
    <property type="match status" value="1"/>
</dbReference>
<dbReference type="Pfam" id="PF02863">
    <property type="entry name" value="Arg_repressor_C"/>
    <property type="match status" value="1"/>
</dbReference>
<dbReference type="PRINTS" id="PR01467">
    <property type="entry name" value="ARGREPRESSOR"/>
</dbReference>
<dbReference type="SUPFAM" id="SSF55252">
    <property type="entry name" value="C-terminal domain of arginine repressor"/>
    <property type="match status" value="1"/>
</dbReference>
<dbReference type="SUPFAM" id="SSF46785">
    <property type="entry name" value="Winged helix' DNA-binding domain"/>
    <property type="match status" value="1"/>
</dbReference>
<keyword id="KW-0028">Amino-acid biosynthesis</keyword>
<keyword id="KW-0055">Arginine biosynthesis</keyword>
<keyword id="KW-0963">Cytoplasm</keyword>
<keyword id="KW-0238">DNA-binding</keyword>
<keyword id="KW-1185">Reference proteome</keyword>
<keyword id="KW-0678">Repressor</keyword>
<keyword id="KW-0804">Transcription</keyword>
<keyword id="KW-0805">Transcription regulation</keyword>
<feature type="chain" id="PRO_1000097871" description="Arginine repressor">
    <location>
        <begin position="1"/>
        <end position="156"/>
    </location>
</feature>
<evidence type="ECO:0000255" key="1">
    <source>
        <dbReference type="HAMAP-Rule" id="MF_00173"/>
    </source>
</evidence>
<proteinExistence type="inferred from homology"/>
<comment type="function">
    <text evidence="1">Regulates arginine biosynthesis genes.</text>
</comment>
<comment type="pathway">
    <text>Amino-acid biosynthesis; L-arginine biosynthesis [regulation].</text>
</comment>
<comment type="subcellular location">
    <subcellularLocation>
        <location evidence="1">Cytoplasm</location>
    </subcellularLocation>
</comment>
<comment type="similarity">
    <text evidence="1">Belongs to the ArgR family.</text>
</comment>